<organism>
    <name type="scientific">Corynebacterium glutamicum (strain ATCC 13032 / DSM 20300 / JCM 1318 / BCRC 11384 / CCUG 27702 / LMG 3730 / NBRC 12168 / NCIMB 10025 / NRRL B-2784 / 534)</name>
    <dbReference type="NCBI Taxonomy" id="196627"/>
    <lineage>
        <taxon>Bacteria</taxon>
        <taxon>Bacillati</taxon>
        <taxon>Actinomycetota</taxon>
        <taxon>Actinomycetes</taxon>
        <taxon>Mycobacteriales</taxon>
        <taxon>Corynebacteriaceae</taxon>
        <taxon>Corynebacterium</taxon>
    </lineage>
</organism>
<keyword id="KW-0067">ATP-binding</keyword>
<keyword id="KW-0175">Coiled coil</keyword>
<keyword id="KW-0547">Nucleotide-binding</keyword>
<keyword id="KW-1185">Reference proteome</keyword>
<feature type="chain" id="PRO_0000396977" description="AAA ATPase forming ring-shaped complexes">
    <location>
        <begin position="1"/>
        <end position="527"/>
    </location>
</feature>
<feature type="region of interest" description="Disordered" evidence="2">
    <location>
        <begin position="1"/>
        <end position="38"/>
    </location>
</feature>
<feature type="region of interest" description="Disordered" evidence="2">
    <location>
        <begin position="492"/>
        <end position="515"/>
    </location>
</feature>
<feature type="coiled-coil region" evidence="1">
    <location>
        <begin position="21"/>
        <end position="53"/>
    </location>
</feature>
<feature type="compositionally biased region" description="Low complexity" evidence="2">
    <location>
        <begin position="1"/>
        <end position="18"/>
    </location>
</feature>
<feature type="compositionally biased region" description="Basic and acidic residues" evidence="2">
    <location>
        <begin position="19"/>
        <end position="33"/>
    </location>
</feature>
<feature type="compositionally biased region" description="Polar residues" evidence="2">
    <location>
        <begin position="497"/>
        <end position="507"/>
    </location>
</feature>
<feature type="binding site" evidence="1">
    <location>
        <begin position="257"/>
        <end position="262"/>
    </location>
    <ligand>
        <name>ATP</name>
        <dbReference type="ChEBI" id="CHEBI:30616"/>
    </ligand>
</feature>
<accession>Q8NQD8</accession>
<accession>Q6M587</accession>
<sequence length="527" mass="58009">MVTMSSPTDSSPSNSFSDFNREEQSRLSDEVRQLKRTNSDLGARNAKLAEMLKSSRDKLSVLFSQLEDMAQPPSVYGTFLETAKDGSNAEIFAGGRRMRVAVSPMLCAADLMPGVQVRLGEGNQVLEACDFEQTGELATLMEMIGRDRALVSDRSGEERVVKLAGPLMDRTAKLPRPGDTLLVDRKAGYAFEAIAKTEISRLALEEAPDVSYQDIGGLDDQIELIQDAVELPFLHPEMYRAYNLHPPKGVLLYGPPGCGKTLIAKAVANSLANRIGETGTSYFINVKGPELLNKYVGETERQIRVIFERARELAGDGRPVIIFFDEMESIFRTRGSGVSSDMETTVVPQLLAELDGVEDLSNVIVVGATNREELIDPAILRPGRLDIKIRINRPNKQGAHDIFTRYINDSIPLAEPAEDLIDRAVDHLYTPRPYVRLTLIDGSVETLNYHDFVSGAMIANIVDRAKKSAIKAHIDGTGVGLTAEQLIQAIDDENQQSEDLPNTSNPDEWSRITGRQGKQVTHAEVVI</sequence>
<comment type="subunit">
    <text evidence="1">Homohexamer. Assembles into a hexameric ring structure.</text>
</comment>
<comment type="similarity">
    <text evidence="1">Belongs to the AAA ATPase family.</text>
</comment>
<reference key="1">
    <citation type="journal article" date="2003" name="Appl. Microbiol. Biotechnol.">
        <title>The Corynebacterium glutamicum genome: features and impacts on biotechnological processes.</title>
        <authorList>
            <person name="Ikeda M."/>
            <person name="Nakagawa S."/>
        </authorList>
    </citation>
    <scope>NUCLEOTIDE SEQUENCE [LARGE SCALE GENOMIC DNA]</scope>
    <source>
        <strain>ATCC 13032 / DSM 20300 / JCM 1318 / BCRC 11384 / CCUG 27702 / LMG 3730 / NBRC 12168 / NCIMB 10025 / NRRL B-2784 / 534</strain>
    </source>
</reference>
<reference key="2">
    <citation type="journal article" date="2003" name="J. Biotechnol.">
        <title>The complete Corynebacterium glutamicum ATCC 13032 genome sequence and its impact on the production of L-aspartate-derived amino acids and vitamins.</title>
        <authorList>
            <person name="Kalinowski J."/>
            <person name="Bathe B."/>
            <person name="Bartels D."/>
            <person name="Bischoff N."/>
            <person name="Bott M."/>
            <person name="Burkovski A."/>
            <person name="Dusch N."/>
            <person name="Eggeling L."/>
            <person name="Eikmanns B.J."/>
            <person name="Gaigalat L."/>
            <person name="Goesmann A."/>
            <person name="Hartmann M."/>
            <person name="Huthmacher K."/>
            <person name="Kraemer R."/>
            <person name="Linke B."/>
            <person name="McHardy A.C."/>
            <person name="Meyer F."/>
            <person name="Moeckel B."/>
            <person name="Pfefferle W."/>
            <person name="Puehler A."/>
            <person name="Rey D.A."/>
            <person name="Rueckert C."/>
            <person name="Rupp O."/>
            <person name="Sahm H."/>
            <person name="Wendisch V.F."/>
            <person name="Wiegraebe I."/>
            <person name="Tauch A."/>
        </authorList>
    </citation>
    <scope>NUCLEOTIDE SEQUENCE [LARGE SCALE GENOMIC DNA]</scope>
    <source>
        <strain>ATCC 13032 / DSM 20300 / JCM 1318 / BCRC 11384 / CCUG 27702 / LMG 3730 / NBRC 12168 / NCIMB 10025 / NRRL B-2784 / 534</strain>
    </source>
</reference>
<gene>
    <name evidence="1" type="primary">arc</name>
    <name type="ordered locus">Cgl1497</name>
    <name type="ordered locus">cg1691</name>
</gene>
<name>ARC_CORGL</name>
<evidence type="ECO:0000255" key="1">
    <source>
        <dbReference type="HAMAP-Rule" id="MF_02112"/>
    </source>
</evidence>
<evidence type="ECO:0000256" key="2">
    <source>
        <dbReference type="SAM" id="MobiDB-lite"/>
    </source>
</evidence>
<dbReference type="EMBL" id="BA000036">
    <property type="protein sequence ID" value="BAB98890.1"/>
    <property type="molecule type" value="Genomic_DNA"/>
</dbReference>
<dbReference type="EMBL" id="BX927152">
    <property type="protein sequence ID" value="CAF21505.1"/>
    <property type="molecule type" value="Genomic_DNA"/>
</dbReference>
<dbReference type="RefSeq" id="NP_600713.1">
    <property type="nucleotide sequence ID" value="NC_003450.3"/>
</dbReference>
<dbReference type="SMR" id="Q8NQD8"/>
<dbReference type="STRING" id="196627.cg1691"/>
<dbReference type="KEGG" id="cgb:cg1691"/>
<dbReference type="KEGG" id="cgl:Cgl1497"/>
<dbReference type="PATRIC" id="fig|196627.13.peg.1464"/>
<dbReference type="eggNOG" id="COG1222">
    <property type="taxonomic scope" value="Bacteria"/>
</dbReference>
<dbReference type="HOGENOM" id="CLU_036054_0_0_11"/>
<dbReference type="OrthoDB" id="9809379at2"/>
<dbReference type="BioCyc" id="CORYNE:G18NG-11080-MONOMER"/>
<dbReference type="Proteomes" id="UP000000582">
    <property type="component" value="Chromosome"/>
</dbReference>
<dbReference type="Proteomes" id="UP000001009">
    <property type="component" value="Chromosome"/>
</dbReference>
<dbReference type="GO" id="GO:0000502">
    <property type="term" value="C:proteasome complex"/>
    <property type="evidence" value="ECO:0007669"/>
    <property type="project" value="InterPro"/>
</dbReference>
<dbReference type="GO" id="GO:0005524">
    <property type="term" value="F:ATP binding"/>
    <property type="evidence" value="ECO:0007669"/>
    <property type="project" value="UniProtKB-UniRule"/>
</dbReference>
<dbReference type="GO" id="GO:0016887">
    <property type="term" value="F:ATP hydrolysis activity"/>
    <property type="evidence" value="ECO:0007669"/>
    <property type="project" value="UniProtKB-UniRule"/>
</dbReference>
<dbReference type="GO" id="GO:0019941">
    <property type="term" value="P:modification-dependent protein catabolic process"/>
    <property type="evidence" value="ECO:0007669"/>
    <property type="project" value="InterPro"/>
</dbReference>
<dbReference type="GO" id="GO:0010498">
    <property type="term" value="P:proteasomal protein catabolic process"/>
    <property type="evidence" value="ECO:0007669"/>
    <property type="project" value="InterPro"/>
</dbReference>
<dbReference type="FunFam" id="3.40.50.300:FF:001025">
    <property type="entry name" value="ATPase family, AAA domain-containing 2B"/>
    <property type="match status" value="1"/>
</dbReference>
<dbReference type="Gene3D" id="1.10.8.60">
    <property type="match status" value="1"/>
</dbReference>
<dbReference type="Gene3D" id="1.20.5.170">
    <property type="match status" value="1"/>
</dbReference>
<dbReference type="Gene3D" id="2.40.50.140">
    <property type="entry name" value="Nucleic acid-binding proteins"/>
    <property type="match status" value="2"/>
</dbReference>
<dbReference type="Gene3D" id="3.40.50.300">
    <property type="entry name" value="P-loop containing nucleotide triphosphate hydrolases"/>
    <property type="match status" value="1"/>
</dbReference>
<dbReference type="HAMAP" id="MF_02112">
    <property type="entry name" value="ARC_ATPase"/>
    <property type="match status" value="1"/>
</dbReference>
<dbReference type="InterPro" id="IPR003593">
    <property type="entry name" value="AAA+_ATPase"/>
</dbReference>
<dbReference type="InterPro" id="IPR050168">
    <property type="entry name" value="AAA_ATPase_domain"/>
</dbReference>
<dbReference type="InterPro" id="IPR003959">
    <property type="entry name" value="ATPase_AAA_core"/>
</dbReference>
<dbReference type="InterPro" id="IPR003960">
    <property type="entry name" value="ATPase_AAA_CS"/>
</dbReference>
<dbReference type="InterPro" id="IPR012340">
    <property type="entry name" value="NA-bd_OB-fold"/>
</dbReference>
<dbReference type="InterPro" id="IPR027417">
    <property type="entry name" value="P-loop_NTPase"/>
</dbReference>
<dbReference type="InterPro" id="IPR032501">
    <property type="entry name" value="Prot_ATP_ID_OB_2nd"/>
</dbReference>
<dbReference type="InterPro" id="IPR041626">
    <property type="entry name" value="Prot_ATP_ID_OB_N"/>
</dbReference>
<dbReference type="InterPro" id="IPR022482">
    <property type="entry name" value="Proteasome_ATPase"/>
</dbReference>
<dbReference type="NCBIfam" id="TIGR03689">
    <property type="entry name" value="pup_AAA"/>
    <property type="match status" value="1"/>
</dbReference>
<dbReference type="PANTHER" id="PTHR23077">
    <property type="entry name" value="AAA-FAMILY ATPASE"/>
    <property type="match status" value="1"/>
</dbReference>
<dbReference type="PANTHER" id="PTHR23077:SF144">
    <property type="entry name" value="PROTEASOME-ASSOCIATED ATPASE"/>
    <property type="match status" value="1"/>
</dbReference>
<dbReference type="Pfam" id="PF00004">
    <property type="entry name" value="AAA"/>
    <property type="match status" value="1"/>
</dbReference>
<dbReference type="Pfam" id="PF16450">
    <property type="entry name" value="Prot_ATP_ID_OB_C"/>
    <property type="match status" value="1"/>
</dbReference>
<dbReference type="Pfam" id="PF17758">
    <property type="entry name" value="Prot_ATP_ID_OB_N"/>
    <property type="match status" value="1"/>
</dbReference>
<dbReference type="SMART" id="SM00382">
    <property type="entry name" value="AAA"/>
    <property type="match status" value="1"/>
</dbReference>
<dbReference type="SUPFAM" id="SSF52540">
    <property type="entry name" value="P-loop containing nucleoside triphosphate hydrolases"/>
    <property type="match status" value="1"/>
</dbReference>
<dbReference type="PROSITE" id="PS00674">
    <property type="entry name" value="AAA"/>
    <property type="match status" value="1"/>
</dbReference>
<protein>
    <recommendedName>
        <fullName evidence="1">AAA ATPase forming ring-shaped complexes</fullName>
        <shortName evidence="1">ARC</shortName>
    </recommendedName>
</protein>
<proteinExistence type="inferred from homology"/>